<accession>Q4UZP1</accession>
<reference key="1">
    <citation type="journal article" date="2005" name="Genome Res.">
        <title>Comparative and functional genomic analyses of the pathogenicity of phytopathogen Xanthomonas campestris pv. campestris.</title>
        <authorList>
            <person name="Qian W."/>
            <person name="Jia Y."/>
            <person name="Ren S.-X."/>
            <person name="He Y.-Q."/>
            <person name="Feng J.-X."/>
            <person name="Lu L.-F."/>
            <person name="Sun Q."/>
            <person name="Ying G."/>
            <person name="Tang D.-J."/>
            <person name="Tang H."/>
            <person name="Wu W."/>
            <person name="Hao P."/>
            <person name="Wang L."/>
            <person name="Jiang B.-L."/>
            <person name="Zeng S."/>
            <person name="Gu W.-Y."/>
            <person name="Lu G."/>
            <person name="Rong L."/>
            <person name="Tian Y."/>
            <person name="Yao Z."/>
            <person name="Fu G."/>
            <person name="Chen B."/>
            <person name="Fang R."/>
            <person name="Qiang B."/>
            <person name="Chen Z."/>
            <person name="Zhao G.-P."/>
            <person name="Tang J.-L."/>
            <person name="He C."/>
        </authorList>
    </citation>
    <scope>NUCLEOTIDE SEQUENCE [LARGE SCALE GENOMIC DNA]</scope>
    <source>
        <strain>8004</strain>
    </source>
</reference>
<feature type="chain" id="PRO_1000067281" description="Pimeloyl-[acyl-carrier protein] methyl ester esterase">
    <location>
        <begin position="1"/>
        <end position="253"/>
    </location>
</feature>
<feature type="active site" description="Nucleophile" evidence="1">
    <location>
        <position position="78"/>
    </location>
</feature>
<feature type="active site" evidence="1">
    <location>
        <position position="203"/>
    </location>
</feature>
<feature type="active site" evidence="1">
    <location>
        <position position="231"/>
    </location>
</feature>
<feature type="binding site" evidence="1">
    <location>
        <position position="18"/>
    </location>
    <ligand>
        <name>substrate</name>
    </ligand>
</feature>
<feature type="binding site" evidence="1">
    <location>
        <begin position="78"/>
        <end position="79"/>
    </location>
    <ligand>
        <name>substrate</name>
    </ligand>
</feature>
<feature type="binding site" evidence="1">
    <location>
        <begin position="139"/>
        <end position="143"/>
    </location>
    <ligand>
        <name>substrate</name>
    </ligand>
</feature>
<feature type="binding site" evidence="1">
    <location>
        <position position="231"/>
    </location>
    <ligand>
        <name>substrate</name>
    </ligand>
</feature>
<proteinExistence type="inferred from homology"/>
<evidence type="ECO:0000255" key="1">
    <source>
        <dbReference type="HAMAP-Rule" id="MF_01260"/>
    </source>
</evidence>
<keyword id="KW-0093">Biotin biosynthesis</keyword>
<keyword id="KW-0963">Cytoplasm</keyword>
<keyword id="KW-0378">Hydrolase</keyword>
<keyword id="KW-0719">Serine esterase</keyword>
<gene>
    <name evidence="1" type="primary">bioH</name>
    <name type="ordered locus">XC_0397</name>
</gene>
<comment type="function">
    <text evidence="1">The physiological role of BioH is to remove the methyl group introduced by BioC when the pimeloyl moiety is complete. It allows to synthesize pimeloyl-ACP via the fatty acid synthetic pathway through the hydrolysis of the ester bonds of pimeloyl-ACP esters.</text>
</comment>
<comment type="catalytic activity">
    <reaction evidence="1">
        <text>6-carboxyhexanoyl-[ACP] methyl ester + H2O = 6-carboxyhexanoyl-[ACP] + methanol + H(+)</text>
        <dbReference type="Rhea" id="RHEA:42700"/>
        <dbReference type="Rhea" id="RHEA-COMP:9955"/>
        <dbReference type="Rhea" id="RHEA-COMP:10186"/>
        <dbReference type="ChEBI" id="CHEBI:15377"/>
        <dbReference type="ChEBI" id="CHEBI:15378"/>
        <dbReference type="ChEBI" id="CHEBI:17790"/>
        <dbReference type="ChEBI" id="CHEBI:78846"/>
        <dbReference type="ChEBI" id="CHEBI:82735"/>
        <dbReference type="EC" id="3.1.1.85"/>
    </reaction>
</comment>
<comment type="pathway">
    <text evidence="1">Cofactor biosynthesis; biotin biosynthesis.</text>
</comment>
<comment type="subunit">
    <text evidence="1">Monomer.</text>
</comment>
<comment type="subcellular location">
    <subcellularLocation>
        <location evidence="1">Cytoplasm</location>
    </subcellularLocation>
</comment>
<comment type="similarity">
    <text evidence="1">Belongs to the AB hydrolase superfamily. Carboxylesterase BioH family.</text>
</comment>
<name>BIOH_XANC8</name>
<sequence>MHIDVIGHGPALVLLHGWALHGGVFAPLVERLAPHYQLHLVDLPGHGFSHDDTTPLALPHVVAAIAAATPAAVWVGWSLGGLFALHAAATQPQVRALAMIAATPRFVRGSDWPDAVEREVFVQFGQDLARDYRGTLDRFLALDTLGSAHARSELRSLRETLTARGEPAASALQDGLGLLERTDLRRALATLARPSLWIAGQRDRLVPAAGMHAAAARAPHAQALTIDGGGHAPFLGHADQVAEALHRFVAALP</sequence>
<dbReference type="EC" id="3.1.1.85" evidence="1"/>
<dbReference type="EMBL" id="CP000050">
    <property type="protein sequence ID" value="AAY47482.1"/>
    <property type="molecule type" value="Genomic_DNA"/>
</dbReference>
<dbReference type="RefSeq" id="WP_011035639.1">
    <property type="nucleotide sequence ID" value="NZ_CP155948.1"/>
</dbReference>
<dbReference type="SMR" id="Q4UZP1"/>
<dbReference type="ESTHER" id="xanca-BIOH">
    <property type="family name" value="BioH"/>
</dbReference>
<dbReference type="KEGG" id="xcb:XC_0397"/>
<dbReference type="HOGENOM" id="CLU_020336_12_2_6"/>
<dbReference type="UniPathway" id="UPA00078"/>
<dbReference type="Proteomes" id="UP000000420">
    <property type="component" value="Chromosome"/>
</dbReference>
<dbReference type="GO" id="GO:0005737">
    <property type="term" value="C:cytoplasm"/>
    <property type="evidence" value="ECO:0007669"/>
    <property type="project" value="UniProtKB-SubCell"/>
</dbReference>
<dbReference type="GO" id="GO:0016020">
    <property type="term" value="C:membrane"/>
    <property type="evidence" value="ECO:0007669"/>
    <property type="project" value="TreeGrafter"/>
</dbReference>
<dbReference type="GO" id="GO:0090499">
    <property type="term" value="F:pimelyl-[acyl-carrier protein] methyl ester esterase activity"/>
    <property type="evidence" value="ECO:0007669"/>
    <property type="project" value="UniProtKB-EC"/>
</dbReference>
<dbReference type="GO" id="GO:0009102">
    <property type="term" value="P:biotin biosynthetic process"/>
    <property type="evidence" value="ECO:0007669"/>
    <property type="project" value="UniProtKB-UniRule"/>
</dbReference>
<dbReference type="Gene3D" id="3.40.50.1820">
    <property type="entry name" value="alpha/beta hydrolase"/>
    <property type="match status" value="1"/>
</dbReference>
<dbReference type="HAMAP" id="MF_01260">
    <property type="entry name" value="Carboxylester"/>
    <property type="match status" value="1"/>
</dbReference>
<dbReference type="InterPro" id="IPR000073">
    <property type="entry name" value="AB_hydrolase_1"/>
</dbReference>
<dbReference type="InterPro" id="IPR029058">
    <property type="entry name" value="AB_hydrolase_fold"/>
</dbReference>
<dbReference type="InterPro" id="IPR050266">
    <property type="entry name" value="AB_hydrolase_sf"/>
</dbReference>
<dbReference type="InterPro" id="IPR010076">
    <property type="entry name" value="BioH"/>
</dbReference>
<dbReference type="NCBIfam" id="TIGR01738">
    <property type="entry name" value="bioH"/>
    <property type="match status" value="1"/>
</dbReference>
<dbReference type="PANTHER" id="PTHR43798:SF31">
    <property type="entry name" value="AB HYDROLASE SUPERFAMILY PROTEIN YCLE"/>
    <property type="match status" value="1"/>
</dbReference>
<dbReference type="PANTHER" id="PTHR43798">
    <property type="entry name" value="MONOACYLGLYCEROL LIPASE"/>
    <property type="match status" value="1"/>
</dbReference>
<dbReference type="Pfam" id="PF00561">
    <property type="entry name" value="Abhydrolase_1"/>
    <property type="match status" value="1"/>
</dbReference>
<dbReference type="SUPFAM" id="SSF53474">
    <property type="entry name" value="alpha/beta-Hydrolases"/>
    <property type="match status" value="1"/>
</dbReference>
<organism>
    <name type="scientific">Xanthomonas campestris pv. campestris (strain 8004)</name>
    <dbReference type="NCBI Taxonomy" id="314565"/>
    <lineage>
        <taxon>Bacteria</taxon>
        <taxon>Pseudomonadati</taxon>
        <taxon>Pseudomonadota</taxon>
        <taxon>Gammaproteobacteria</taxon>
        <taxon>Lysobacterales</taxon>
        <taxon>Lysobacteraceae</taxon>
        <taxon>Xanthomonas</taxon>
    </lineage>
</organism>
<protein>
    <recommendedName>
        <fullName evidence="1">Pimeloyl-[acyl-carrier protein] methyl ester esterase</fullName>
        <ecNumber evidence="1">3.1.1.85</ecNumber>
    </recommendedName>
    <alternativeName>
        <fullName evidence="1">Biotin synthesis protein BioH</fullName>
    </alternativeName>
    <alternativeName>
        <fullName evidence="1">Carboxylesterase BioH</fullName>
    </alternativeName>
</protein>